<name>RF1_SYNFM</name>
<gene>
    <name evidence="1" type="primary">prfA</name>
    <name type="ordered locus">Sfum_1713</name>
</gene>
<protein>
    <recommendedName>
        <fullName evidence="1">Peptide chain release factor 1</fullName>
        <shortName evidence="1">RF-1</shortName>
    </recommendedName>
</protein>
<reference key="1">
    <citation type="submission" date="2006-10" db="EMBL/GenBank/DDBJ databases">
        <title>Complete sequence of Syntrophobacter fumaroxidans MPOB.</title>
        <authorList>
            <consortium name="US DOE Joint Genome Institute"/>
            <person name="Copeland A."/>
            <person name="Lucas S."/>
            <person name="Lapidus A."/>
            <person name="Barry K."/>
            <person name="Detter J.C."/>
            <person name="Glavina del Rio T."/>
            <person name="Hammon N."/>
            <person name="Israni S."/>
            <person name="Pitluck S."/>
            <person name="Goltsman E.G."/>
            <person name="Martinez M."/>
            <person name="Schmutz J."/>
            <person name="Larimer F."/>
            <person name="Land M."/>
            <person name="Hauser L."/>
            <person name="Kyrpides N."/>
            <person name="Kim E."/>
            <person name="Boone D.R."/>
            <person name="Brockman F."/>
            <person name="Culley D."/>
            <person name="Ferry J."/>
            <person name="Gunsalus R."/>
            <person name="McInerney M.J."/>
            <person name="Morrison M."/>
            <person name="Plugge C."/>
            <person name="Rohlin L."/>
            <person name="Scholten J."/>
            <person name="Sieber J."/>
            <person name="Stams A.J.M."/>
            <person name="Worm P."/>
            <person name="Henstra A.M."/>
            <person name="Richardson P."/>
        </authorList>
    </citation>
    <scope>NUCLEOTIDE SEQUENCE [LARGE SCALE GENOMIC DNA]</scope>
    <source>
        <strain>DSM 10017 / MPOB</strain>
    </source>
</reference>
<keyword id="KW-0963">Cytoplasm</keyword>
<keyword id="KW-0488">Methylation</keyword>
<keyword id="KW-0648">Protein biosynthesis</keyword>
<keyword id="KW-1185">Reference proteome</keyword>
<accession>A0LIZ8</accession>
<dbReference type="EMBL" id="CP000478">
    <property type="protein sequence ID" value="ABK17400.1"/>
    <property type="molecule type" value="Genomic_DNA"/>
</dbReference>
<dbReference type="RefSeq" id="WP_011698570.1">
    <property type="nucleotide sequence ID" value="NC_008554.1"/>
</dbReference>
<dbReference type="SMR" id="A0LIZ8"/>
<dbReference type="FunCoup" id="A0LIZ8">
    <property type="interactions" value="473"/>
</dbReference>
<dbReference type="STRING" id="335543.Sfum_1713"/>
<dbReference type="KEGG" id="sfu:Sfum_1713"/>
<dbReference type="eggNOG" id="COG0216">
    <property type="taxonomic scope" value="Bacteria"/>
</dbReference>
<dbReference type="HOGENOM" id="CLU_036856_0_1_7"/>
<dbReference type="InParanoid" id="A0LIZ8"/>
<dbReference type="OrthoDB" id="9806673at2"/>
<dbReference type="Proteomes" id="UP000001784">
    <property type="component" value="Chromosome"/>
</dbReference>
<dbReference type="GO" id="GO:0005737">
    <property type="term" value="C:cytoplasm"/>
    <property type="evidence" value="ECO:0007669"/>
    <property type="project" value="UniProtKB-SubCell"/>
</dbReference>
<dbReference type="GO" id="GO:0016149">
    <property type="term" value="F:translation release factor activity, codon specific"/>
    <property type="evidence" value="ECO:0007669"/>
    <property type="project" value="UniProtKB-UniRule"/>
</dbReference>
<dbReference type="FunFam" id="3.30.160.20:FF:000004">
    <property type="entry name" value="Peptide chain release factor 1"/>
    <property type="match status" value="1"/>
</dbReference>
<dbReference type="FunFam" id="3.30.70.1660:FF:000002">
    <property type="entry name" value="Peptide chain release factor 1"/>
    <property type="match status" value="1"/>
</dbReference>
<dbReference type="FunFam" id="3.30.70.1660:FF:000004">
    <property type="entry name" value="Peptide chain release factor 1"/>
    <property type="match status" value="1"/>
</dbReference>
<dbReference type="Gene3D" id="3.30.160.20">
    <property type="match status" value="1"/>
</dbReference>
<dbReference type="Gene3D" id="3.30.70.1660">
    <property type="match status" value="2"/>
</dbReference>
<dbReference type="Gene3D" id="6.10.140.1950">
    <property type="match status" value="1"/>
</dbReference>
<dbReference type="HAMAP" id="MF_00093">
    <property type="entry name" value="Rel_fac_1"/>
    <property type="match status" value="1"/>
</dbReference>
<dbReference type="InterPro" id="IPR005139">
    <property type="entry name" value="PCRF"/>
</dbReference>
<dbReference type="InterPro" id="IPR000352">
    <property type="entry name" value="Pep_chain_release_fac_I"/>
</dbReference>
<dbReference type="InterPro" id="IPR045853">
    <property type="entry name" value="Pep_chain_release_fac_I_sf"/>
</dbReference>
<dbReference type="InterPro" id="IPR050057">
    <property type="entry name" value="Prokaryotic/Mito_RF"/>
</dbReference>
<dbReference type="InterPro" id="IPR004373">
    <property type="entry name" value="RF-1"/>
</dbReference>
<dbReference type="NCBIfam" id="TIGR00019">
    <property type="entry name" value="prfA"/>
    <property type="match status" value="1"/>
</dbReference>
<dbReference type="NCBIfam" id="NF001859">
    <property type="entry name" value="PRK00591.1"/>
    <property type="match status" value="1"/>
</dbReference>
<dbReference type="PANTHER" id="PTHR43804">
    <property type="entry name" value="LD18447P"/>
    <property type="match status" value="1"/>
</dbReference>
<dbReference type="PANTHER" id="PTHR43804:SF7">
    <property type="entry name" value="LD18447P"/>
    <property type="match status" value="1"/>
</dbReference>
<dbReference type="Pfam" id="PF03462">
    <property type="entry name" value="PCRF"/>
    <property type="match status" value="1"/>
</dbReference>
<dbReference type="Pfam" id="PF00472">
    <property type="entry name" value="RF-1"/>
    <property type="match status" value="1"/>
</dbReference>
<dbReference type="SMART" id="SM00937">
    <property type="entry name" value="PCRF"/>
    <property type="match status" value="1"/>
</dbReference>
<dbReference type="SUPFAM" id="SSF75620">
    <property type="entry name" value="Release factor"/>
    <property type="match status" value="1"/>
</dbReference>
<dbReference type="PROSITE" id="PS00745">
    <property type="entry name" value="RF_PROK_I"/>
    <property type="match status" value="1"/>
</dbReference>
<evidence type="ECO:0000255" key="1">
    <source>
        <dbReference type="HAMAP-Rule" id="MF_00093"/>
    </source>
</evidence>
<feature type="chain" id="PRO_1000057620" description="Peptide chain release factor 1">
    <location>
        <begin position="1"/>
        <end position="355"/>
    </location>
</feature>
<feature type="modified residue" description="N5-methylglutamine" evidence="1">
    <location>
        <position position="233"/>
    </location>
</feature>
<sequence length="355" mass="40428">MFDRLESVAQKFRKLEEDLSNPELLANQKEYQKIAREHAEIAPIVEAYGLYKGLHRQLLDNQQLLEQETDPEMRELFRQEIAELKRQIEDTENGLKLMLAPRDPNDDKNVILEIRAGTGGEEAALFVSDLFRMYTRYAELRRWKVEILDSHQTGIGGLKEVIAAVNGQGAYSRLKFERGVHRVQRVPVTESQGRIHTSAVTVAVLPEAEEVDVYIDPNDLRVDVFRSSGPGGQSVNTTDSAVRVTHIPSGLVVICQDEKSQHKNKAKALKVLRARLLDQMQSEQEARIARDRKSQVGTGDRSERIRTYNFPQNRVSDHRINLTLYKLDIILGGALDEIIDPLSTHFQAEALRREE</sequence>
<proteinExistence type="inferred from homology"/>
<comment type="function">
    <text evidence="1">Peptide chain release factor 1 directs the termination of translation in response to the peptide chain termination codons UAG and UAA.</text>
</comment>
<comment type="subcellular location">
    <subcellularLocation>
        <location evidence="1">Cytoplasm</location>
    </subcellularLocation>
</comment>
<comment type="PTM">
    <text evidence="1">Methylated by PrmC. Methylation increases the termination efficiency of RF1.</text>
</comment>
<comment type="similarity">
    <text evidence="1">Belongs to the prokaryotic/mitochondrial release factor family.</text>
</comment>
<organism>
    <name type="scientific">Syntrophobacter fumaroxidans (strain DSM 10017 / MPOB)</name>
    <dbReference type="NCBI Taxonomy" id="335543"/>
    <lineage>
        <taxon>Bacteria</taxon>
        <taxon>Pseudomonadati</taxon>
        <taxon>Thermodesulfobacteriota</taxon>
        <taxon>Syntrophobacteria</taxon>
        <taxon>Syntrophobacterales</taxon>
        <taxon>Syntrophobacteraceae</taxon>
        <taxon>Syntrophobacter</taxon>
    </lineage>
</organism>